<accession>A9MAS2</accession>
<proteinExistence type="inferred from homology"/>
<evidence type="ECO:0000255" key="1">
    <source>
        <dbReference type="HAMAP-Rule" id="MF_00121"/>
    </source>
</evidence>
<name>GATB_BRUC2</name>
<gene>
    <name evidence="1" type="primary">gatB</name>
    <name type="ordered locus">BCAN_A0914</name>
</gene>
<organism>
    <name type="scientific">Brucella canis (strain ATCC 23365 / NCTC 10854 / RM-666)</name>
    <dbReference type="NCBI Taxonomy" id="483179"/>
    <lineage>
        <taxon>Bacteria</taxon>
        <taxon>Pseudomonadati</taxon>
        <taxon>Pseudomonadota</taxon>
        <taxon>Alphaproteobacteria</taxon>
        <taxon>Hyphomicrobiales</taxon>
        <taxon>Brucellaceae</taxon>
        <taxon>Brucella/Ochrobactrum group</taxon>
        <taxon>Brucella</taxon>
    </lineage>
</organism>
<sequence length="500" mass="54714">MSIIDTRTPEPKRFISGATGDWEVVIGMEVHAQVTSESKLFSGASTAFGAEPNSNVSLVDAAMPGMLPVINLECVRQAVRTGIGLNAQINLKSVFDRKNYFYPDLPQGYQISQFKQPIVGEGKIMISVGPDNKGQFEDVEIGIERLHLEQDAGKSMHDQHPTMSYVDLNRSGVALMEIVSKPDLRSSDEARAYLTKLRTIVRYLGTCDGNMDEGSMRADVNVSVRRPGGEFGTRCEIKNVNSIRFVGQAIEYEARRQIAILEDGGVIDQETRLFDPVKGETRSMRSKEEAHDYRYFPDPDLLPLEFDQAFVDALAAKLPELPDVKKQRLVETLGISVYDASILVTEKAIADYYEAVAEGRDGKAAANWVINDLLGALNKAGKDIEESPISPAQLGAIIDLIKEGTISGKIAKDLFEIVWNEGGDPKKLVEERGMKQVTDTGAIEKAVDDVIAANPDKVEQAKAKPTLAGWFVGQVMKATGGKANPQAVNELVKSKLGIEE</sequence>
<protein>
    <recommendedName>
        <fullName evidence="1">Aspartyl/glutamyl-tRNA(Asn/Gln) amidotransferase subunit B</fullName>
        <shortName evidence="1">Asp/Glu-ADT subunit B</shortName>
        <ecNumber evidence="1">6.3.5.-</ecNumber>
    </recommendedName>
</protein>
<reference key="1">
    <citation type="submission" date="2007-10" db="EMBL/GenBank/DDBJ databases">
        <title>Brucella canis ATCC 23365 whole genome shotgun sequencing project.</title>
        <authorList>
            <person name="Setubal J.C."/>
            <person name="Bowns C."/>
            <person name="Boyle S."/>
            <person name="Crasta O.R."/>
            <person name="Czar M.J."/>
            <person name="Dharmanolla C."/>
            <person name="Gillespie J.J."/>
            <person name="Kenyon R.W."/>
            <person name="Lu J."/>
            <person name="Mane S."/>
            <person name="Mohapatra S."/>
            <person name="Nagrani S."/>
            <person name="Purkayastha A."/>
            <person name="Rajasimha H.K."/>
            <person name="Shallom J.M."/>
            <person name="Shallom S."/>
            <person name="Shukla M."/>
            <person name="Snyder E.E."/>
            <person name="Sobral B.W."/>
            <person name="Wattam A.R."/>
            <person name="Will R."/>
            <person name="Williams K."/>
            <person name="Yoo H."/>
            <person name="Bruce D."/>
            <person name="Detter C."/>
            <person name="Munk C."/>
            <person name="Brettin T.S."/>
        </authorList>
    </citation>
    <scope>NUCLEOTIDE SEQUENCE [LARGE SCALE GENOMIC DNA]</scope>
    <source>
        <strain>ATCC 23365 / NCTC 10854 / RM-666</strain>
    </source>
</reference>
<comment type="function">
    <text evidence="1">Allows the formation of correctly charged Asn-tRNA(Asn) or Gln-tRNA(Gln) through the transamidation of misacylated Asp-tRNA(Asn) or Glu-tRNA(Gln) in organisms which lack either or both of asparaginyl-tRNA or glutaminyl-tRNA synthetases. The reaction takes place in the presence of glutamine and ATP through an activated phospho-Asp-tRNA(Asn) or phospho-Glu-tRNA(Gln).</text>
</comment>
<comment type="catalytic activity">
    <reaction evidence="1">
        <text>L-glutamyl-tRNA(Gln) + L-glutamine + ATP + H2O = L-glutaminyl-tRNA(Gln) + L-glutamate + ADP + phosphate + H(+)</text>
        <dbReference type="Rhea" id="RHEA:17521"/>
        <dbReference type="Rhea" id="RHEA-COMP:9681"/>
        <dbReference type="Rhea" id="RHEA-COMP:9684"/>
        <dbReference type="ChEBI" id="CHEBI:15377"/>
        <dbReference type="ChEBI" id="CHEBI:15378"/>
        <dbReference type="ChEBI" id="CHEBI:29985"/>
        <dbReference type="ChEBI" id="CHEBI:30616"/>
        <dbReference type="ChEBI" id="CHEBI:43474"/>
        <dbReference type="ChEBI" id="CHEBI:58359"/>
        <dbReference type="ChEBI" id="CHEBI:78520"/>
        <dbReference type="ChEBI" id="CHEBI:78521"/>
        <dbReference type="ChEBI" id="CHEBI:456216"/>
    </reaction>
</comment>
<comment type="catalytic activity">
    <reaction evidence="1">
        <text>L-aspartyl-tRNA(Asn) + L-glutamine + ATP + H2O = L-asparaginyl-tRNA(Asn) + L-glutamate + ADP + phosphate + 2 H(+)</text>
        <dbReference type="Rhea" id="RHEA:14513"/>
        <dbReference type="Rhea" id="RHEA-COMP:9674"/>
        <dbReference type="Rhea" id="RHEA-COMP:9677"/>
        <dbReference type="ChEBI" id="CHEBI:15377"/>
        <dbReference type="ChEBI" id="CHEBI:15378"/>
        <dbReference type="ChEBI" id="CHEBI:29985"/>
        <dbReference type="ChEBI" id="CHEBI:30616"/>
        <dbReference type="ChEBI" id="CHEBI:43474"/>
        <dbReference type="ChEBI" id="CHEBI:58359"/>
        <dbReference type="ChEBI" id="CHEBI:78515"/>
        <dbReference type="ChEBI" id="CHEBI:78516"/>
        <dbReference type="ChEBI" id="CHEBI:456216"/>
    </reaction>
</comment>
<comment type="subunit">
    <text evidence="1">Heterotrimer of A, B and C subunits.</text>
</comment>
<comment type="similarity">
    <text evidence="1">Belongs to the GatB/GatE family. GatB subfamily.</text>
</comment>
<dbReference type="EC" id="6.3.5.-" evidence="1"/>
<dbReference type="EMBL" id="CP000872">
    <property type="protein sequence ID" value="ABX61975.1"/>
    <property type="molecule type" value="Genomic_DNA"/>
</dbReference>
<dbReference type="RefSeq" id="WP_002964030.1">
    <property type="nucleotide sequence ID" value="NC_010103.1"/>
</dbReference>
<dbReference type="SMR" id="A9MAS2"/>
<dbReference type="GeneID" id="97533805"/>
<dbReference type="KEGG" id="bcs:BCAN_A0914"/>
<dbReference type="HOGENOM" id="CLU_019240_0_0_5"/>
<dbReference type="PhylomeDB" id="A9MAS2"/>
<dbReference type="Proteomes" id="UP000001385">
    <property type="component" value="Chromosome I"/>
</dbReference>
<dbReference type="GO" id="GO:0050566">
    <property type="term" value="F:asparaginyl-tRNA synthase (glutamine-hydrolyzing) activity"/>
    <property type="evidence" value="ECO:0007669"/>
    <property type="project" value="RHEA"/>
</dbReference>
<dbReference type="GO" id="GO:0005524">
    <property type="term" value="F:ATP binding"/>
    <property type="evidence" value="ECO:0007669"/>
    <property type="project" value="UniProtKB-KW"/>
</dbReference>
<dbReference type="GO" id="GO:0050567">
    <property type="term" value="F:glutaminyl-tRNA synthase (glutamine-hydrolyzing) activity"/>
    <property type="evidence" value="ECO:0007669"/>
    <property type="project" value="UniProtKB-UniRule"/>
</dbReference>
<dbReference type="GO" id="GO:0070681">
    <property type="term" value="P:glutaminyl-tRNAGln biosynthesis via transamidation"/>
    <property type="evidence" value="ECO:0007669"/>
    <property type="project" value="TreeGrafter"/>
</dbReference>
<dbReference type="GO" id="GO:0006412">
    <property type="term" value="P:translation"/>
    <property type="evidence" value="ECO:0007669"/>
    <property type="project" value="UniProtKB-UniRule"/>
</dbReference>
<dbReference type="FunFam" id="1.10.10.410:FF:000001">
    <property type="entry name" value="Aspartyl/glutamyl-tRNA(Asn/Gln) amidotransferase subunit B"/>
    <property type="match status" value="1"/>
</dbReference>
<dbReference type="Gene3D" id="1.10.10.410">
    <property type="match status" value="1"/>
</dbReference>
<dbReference type="Gene3D" id="1.10.150.380">
    <property type="entry name" value="GatB domain, N-terminal subdomain"/>
    <property type="match status" value="1"/>
</dbReference>
<dbReference type="HAMAP" id="MF_00121">
    <property type="entry name" value="GatB"/>
    <property type="match status" value="1"/>
</dbReference>
<dbReference type="InterPro" id="IPR017959">
    <property type="entry name" value="Asn/Gln-tRNA_amidoTrfase_suB/E"/>
</dbReference>
<dbReference type="InterPro" id="IPR006075">
    <property type="entry name" value="Asn/Gln-tRNA_Trfase_suB/E_cat"/>
</dbReference>
<dbReference type="InterPro" id="IPR018027">
    <property type="entry name" value="Asn/Gln_amidotransferase"/>
</dbReference>
<dbReference type="InterPro" id="IPR003789">
    <property type="entry name" value="Asn/Gln_tRNA_amidoTrase-B-like"/>
</dbReference>
<dbReference type="InterPro" id="IPR004413">
    <property type="entry name" value="GatB"/>
</dbReference>
<dbReference type="InterPro" id="IPR042114">
    <property type="entry name" value="GatB_C_1"/>
</dbReference>
<dbReference type="InterPro" id="IPR023168">
    <property type="entry name" value="GatB_Yqey_C_2"/>
</dbReference>
<dbReference type="InterPro" id="IPR017958">
    <property type="entry name" value="Gln-tRNA_amidoTrfase_suB_CS"/>
</dbReference>
<dbReference type="InterPro" id="IPR014746">
    <property type="entry name" value="Gln_synth/guanido_kin_cat_dom"/>
</dbReference>
<dbReference type="NCBIfam" id="TIGR00133">
    <property type="entry name" value="gatB"/>
    <property type="match status" value="1"/>
</dbReference>
<dbReference type="NCBIfam" id="NF004012">
    <property type="entry name" value="PRK05477.1-2"/>
    <property type="match status" value="1"/>
</dbReference>
<dbReference type="NCBIfam" id="NF004014">
    <property type="entry name" value="PRK05477.1-4"/>
    <property type="match status" value="1"/>
</dbReference>
<dbReference type="NCBIfam" id="NF004015">
    <property type="entry name" value="PRK05477.1-5"/>
    <property type="match status" value="1"/>
</dbReference>
<dbReference type="PANTHER" id="PTHR11659">
    <property type="entry name" value="GLUTAMYL-TRNA GLN AMIDOTRANSFERASE SUBUNIT B MITOCHONDRIAL AND PROKARYOTIC PET112-RELATED"/>
    <property type="match status" value="1"/>
</dbReference>
<dbReference type="PANTHER" id="PTHR11659:SF0">
    <property type="entry name" value="GLUTAMYL-TRNA(GLN) AMIDOTRANSFERASE SUBUNIT B, MITOCHONDRIAL"/>
    <property type="match status" value="1"/>
</dbReference>
<dbReference type="Pfam" id="PF02934">
    <property type="entry name" value="GatB_N"/>
    <property type="match status" value="1"/>
</dbReference>
<dbReference type="Pfam" id="PF02637">
    <property type="entry name" value="GatB_Yqey"/>
    <property type="match status" value="1"/>
</dbReference>
<dbReference type="SMART" id="SM00845">
    <property type="entry name" value="GatB_Yqey"/>
    <property type="match status" value="1"/>
</dbReference>
<dbReference type="SUPFAM" id="SSF89095">
    <property type="entry name" value="GatB/YqeY motif"/>
    <property type="match status" value="1"/>
</dbReference>
<dbReference type="SUPFAM" id="SSF55931">
    <property type="entry name" value="Glutamine synthetase/guanido kinase"/>
    <property type="match status" value="1"/>
</dbReference>
<dbReference type="PROSITE" id="PS01234">
    <property type="entry name" value="GATB"/>
    <property type="match status" value="1"/>
</dbReference>
<feature type="chain" id="PRO_1000076151" description="Aspartyl/glutamyl-tRNA(Asn/Gln) amidotransferase subunit B">
    <location>
        <begin position="1"/>
        <end position="500"/>
    </location>
</feature>
<keyword id="KW-0067">ATP-binding</keyword>
<keyword id="KW-0436">Ligase</keyword>
<keyword id="KW-0547">Nucleotide-binding</keyword>
<keyword id="KW-0648">Protein biosynthesis</keyword>
<keyword id="KW-1185">Reference proteome</keyword>